<comment type="function">
    <text evidence="1">Involved in gene transcription regulation. Acts as a transcriptional repressor in concert with the corepressor UXT to regulate androgen receptor (AR) transcription. May act as a tumor suppressor to repress AR-mediated gene transcription and to inhibit anchorage-independent growth in prostate cancer cells. Required for cell survival in ovarian cancer cells. Together with UXT, associates with chromatin to the NKX3-1 promoter region (By similarity).</text>
</comment>
<comment type="function">
    <text evidence="1">Plays a central role in maintaining S6K1 signaling and BAD phosphorylation under normal growth conditions thereby protecting cells from potential deleterious effects of sustained S6K1 signaling. The URI1-PPP1CC complex acts as a central component of a negative feedback mechanism that counteracts excessive S6K1 survival signaling to BAD in response to growth factors. Mediates inhibition of PPP1CC phosphatase activity in mitochondria. Coordinates the regulation of nutrient-sensitive gene expression availability in a mTOR-dependent manner. Seems to be a scaffolding protein able to assemble a prefoldin-like complex that contains PFDs and proteins with roles in transcription and ubiquitination (By similarity).</text>
</comment>
<comment type="subunit">
    <text evidence="2">Homodimer. Component of the PAQosome complex which is responsible for the biogenesis of several protein complexes and which consists of R2TP complex members RUVBL1, RUVBL2, RPAP3 and PIH1D1, URI complex members PFDN2, PFDN6, PDRG1, UXT and URI1 as well as ASDURF, POLR2E and DNAAF10/WDR92. Interacts with POLR2E/RPB5, RUVBL2 and RUVBL1. Interacts with PFDN2, PFDN4 and STAP1; the interactions are phosphorylation-dependent and occur in a growth-dependent manner in the mitochondrion. Interacts with UXT. Interacts with PPP1CC; the interaction is phosphorylation-dependent and occurs in a growth factor-dependent manner. Interacts (via the middle C-terminal region) with GTF2F1 and GTF2F2. Interacts with DMAP1. Interacts with TSC1 and TSC2. Interacts with PRPF8 and EFTUD2 in a ZNHIT2-dependent manner.</text>
</comment>
<comment type="subcellular location">
    <subcellularLocation>
        <location>Nucleus</location>
    </subcellularLocation>
    <subcellularLocation>
        <location>Cytoplasm</location>
    </subcellularLocation>
    <subcellularLocation>
        <location>Mitochondrion</location>
    </subcellularLocation>
    <subcellularLocation>
        <location evidence="1">Cell projection</location>
        <location evidence="1">Dendrite</location>
    </subcellularLocation>
    <text evidence="1">Colocalizes with PFDN2, PFDN4, PPP1CC, RPS6KB1 and STAP1 in mitochondrion.</text>
</comment>
<comment type="PTM">
    <text evidence="1">Phosphorylated. Phosphorylation occurs essentially on serine residues. Phosphorylation occurs in response to androgen treatment in prostate cancer cells in a mTOR-dependent manner. Phosphorylated; hyperhosphorylated in mitochondria in a mTORC-dependent signaling pathway. Phosphorylated at Ser-361 by RPS6KB1 in a growth factor- and rapamycin-dependent manner. S6K1-mediated mitochondrial phosphorylation at Ser-361 disrupts the URI1-PPP1CC complex in the mitochondrion, relieves PPP1CC phosphatase inhibition activity and hence engages a negative feedback diminishing RPS6KB1 kinase activity, preventing sustained S6K1-dependent signaling (By similarity).</text>
</comment>
<comment type="similarity">
    <text evidence="4">Belongs to the RNA polymerase II subunit 5-mediating protein family.</text>
</comment>
<organism>
    <name type="scientific">Bos taurus</name>
    <name type="common">Bovine</name>
    <dbReference type="NCBI Taxonomy" id="9913"/>
    <lineage>
        <taxon>Eukaryota</taxon>
        <taxon>Metazoa</taxon>
        <taxon>Chordata</taxon>
        <taxon>Craniata</taxon>
        <taxon>Vertebrata</taxon>
        <taxon>Euteleostomi</taxon>
        <taxon>Mammalia</taxon>
        <taxon>Eutheria</taxon>
        <taxon>Laurasiatheria</taxon>
        <taxon>Artiodactyla</taxon>
        <taxon>Ruminantia</taxon>
        <taxon>Pecora</taxon>
        <taxon>Bovidae</taxon>
        <taxon>Bovinae</taxon>
        <taxon>Bos</taxon>
    </lineage>
</organism>
<accession>Q3B7M7</accession>
<accession>A7E3X6</accession>
<protein>
    <recommendedName>
        <fullName>Unconventional prefoldin RPB5 interactor</fullName>
    </recommendedName>
    <alternativeName>
        <fullName>Protein phosphatase 1 regulatory subunit 19</fullName>
    </alternativeName>
    <alternativeName>
        <fullName>RNA polymerase II subunit 5-mediating protein</fullName>
        <shortName>RPB5-mediating protein</shortName>
    </alternativeName>
</protein>
<proteinExistence type="evidence at transcript level"/>
<gene>
    <name type="primary">URI1</name>
    <name type="synonym">PPP1R19</name>
    <name type="synonym">RMP</name>
    <name type="synonym">URI</name>
</gene>
<dbReference type="EMBL" id="BT030747">
    <property type="protein sequence ID" value="ABS45063.1"/>
    <property type="molecule type" value="mRNA"/>
</dbReference>
<dbReference type="EMBL" id="BC107540">
    <property type="protein sequence ID" value="AAI07541.1"/>
    <property type="molecule type" value="mRNA"/>
</dbReference>
<dbReference type="RefSeq" id="NP_001030382.1">
    <property type="nucleotide sequence ID" value="NM_001035305.2"/>
</dbReference>
<dbReference type="SMR" id="Q3B7M7"/>
<dbReference type="FunCoup" id="Q3B7M7">
    <property type="interactions" value="2180"/>
</dbReference>
<dbReference type="STRING" id="9913.ENSBTAP00000009950"/>
<dbReference type="PaxDb" id="9913-ENSBTAP00000009950"/>
<dbReference type="GeneID" id="515119"/>
<dbReference type="KEGG" id="bta:515119"/>
<dbReference type="CTD" id="8725"/>
<dbReference type="eggNOG" id="KOG3130">
    <property type="taxonomic scope" value="Eukaryota"/>
</dbReference>
<dbReference type="InParanoid" id="Q3B7M7"/>
<dbReference type="OrthoDB" id="21413at2759"/>
<dbReference type="Proteomes" id="UP000009136">
    <property type="component" value="Unplaced"/>
</dbReference>
<dbReference type="GO" id="GO:0005737">
    <property type="term" value="C:cytoplasm"/>
    <property type="evidence" value="ECO:0000250"/>
    <property type="project" value="UniProtKB"/>
</dbReference>
<dbReference type="GO" id="GO:0005829">
    <property type="term" value="C:cytosol"/>
    <property type="evidence" value="ECO:0007669"/>
    <property type="project" value="UniProtKB-ARBA"/>
</dbReference>
<dbReference type="GO" id="GO:0030425">
    <property type="term" value="C:dendrite"/>
    <property type="evidence" value="ECO:0007669"/>
    <property type="project" value="UniProtKB-SubCell"/>
</dbReference>
<dbReference type="GO" id="GO:0005739">
    <property type="term" value="C:mitochondrion"/>
    <property type="evidence" value="ECO:0007669"/>
    <property type="project" value="UniProtKB-SubCell"/>
</dbReference>
<dbReference type="GO" id="GO:0005634">
    <property type="term" value="C:nucleus"/>
    <property type="evidence" value="ECO:0000250"/>
    <property type="project" value="UniProtKB"/>
</dbReference>
<dbReference type="GO" id="GO:0003682">
    <property type="term" value="F:chromatin binding"/>
    <property type="evidence" value="ECO:0000250"/>
    <property type="project" value="UniProtKB"/>
</dbReference>
<dbReference type="GO" id="GO:0019212">
    <property type="term" value="F:phosphatase inhibitor activity"/>
    <property type="evidence" value="ECO:0000318"/>
    <property type="project" value="GO_Central"/>
</dbReference>
<dbReference type="GO" id="GO:0004864">
    <property type="term" value="F:protein phosphatase inhibitor activity"/>
    <property type="evidence" value="ECO:0007669"/>
    <property type="project" value="UniProtKB-KW"/>
</dbReference>
<dbReference type="GO" id="GO:0000993">
    <property type="term" value="F:RNA polymerase II complex binding"/>
    <property type="evidence" value="ECO:0000250"/>
    <property type="project" value="UniProtKB"/>
</dbReference>
<dbReference type="GO" id="GO:0003714">
    <property type="term" value="F:transcription corepressor activity"/>
    <property type="evidence" value="ECO:0000250"/>
    <property type="project" value="UniProtKB"/>
</dbReference>
<dbReference type="GO" id="GO:0071363">
    <property type="term" value="P:cellular response to growth factor stimulus"/>
    <property type="evidence" value="ECO:0000250"/>
    <property type="project" value="UniProtKB"/>
</dbReference>
<dbReference type="GO" id="GO:0071383">
    <property type="term" value="P:cellular response to steroid hormone stimulus"/>
    <property type="evidence" value="ECO:0000250"/>
    <property type="project" value="UniProtKB"/>
</dbReference>
<dbReference type="GO" id="GO:0042771">
    <property type="term" value="P:intrinsic apoptotic signaling pathway in response to DNA damage by p53 class mediator"/>
    <property type="evidence" value="ECO:0000318"/>
    <property type="project" value="GO_Central"/>
</dbReference>
<dbReference type="GO" id="GO:2001243">
    <property type="term" value="P:negative regulation of intrinsic apoptotic signaling pathway"/>
    <property type="evidence" value="ECO:0000250"/>
    <property type="project" value="UniProtKB"/>
</dbReference>
<dbReference type="GO" id="GO:0010923">
    <property type="term" value="P:negative regulation of phosphatase activity"/>
    <property type="evidence" value="ECO:0000250"/>
    <property type="project" value="UniProtKB"/>
</dbReference>
<dbReference type="GO" id="GO:0000122">
    <property type="term" value="P:negative regulation of transcription by RNA polymerase II"/>
    <property type="evidence" value="ECO:0000250"/>
    <property type="project" value="UniProtKB"/>
</dbReference>
<dbReference type="GO" id="GO:0001558">
    <property type="term" value="P:regulation of cell growth"/>
    <property type="evidence" value="ECO:0000250"/>
    <property type="project" value="UniProtKB"/>
</dbReference>
<dbReference type="GO" id="GO:0006357">
    <property type="term" value="P:regulation of transcription by RNA polymerase II"/>
    <property type="evidence" value="ECO:0000250"/>
    <property type="project" value="UniProtKB"/>
</dbReference>
<dbReference type="GO" id="GO:0009615">
    <property type="term" value="P:response to virus"/>
    <property type="evidence" value="ECO:0000250"/>
    <property type="project" value="UniProtKB"/>
</dbReference>
<dbReference type="CDD" id="cd23159">
    <property type="entry name" value="Prefoldin_URI1"/>
    <property type="match status" value="1"/>
</dbReference>
<dbReference type="FunFam" id="1.10.287.370:FF:000008">
    <property type="entry name" value="unconventional prefoldin RPB5 interactor 1"/>
    <property type="match status" value="1"/>
</dbReference>
<dbReference type="Gene3D" id="1.10.287.370">
    <property type="match status" value="1"/>
</dbReference>
<dbReference type="InterPro" id="IPR009053">
    <property type="entry name" value="Prefoldin"/>
</dbReference>
<dbReference type="InterPro" id="IPR004127">
    <property type="entry name" value="Prefoldin_subunit_alpha"/>
</dbReference>
<dbReference type="InterPro" id="IPR052255">
    <property type="entry name" value="RNA_pol_II_subunit5-mediator"/>
</dbReference>
<dbReference type="PANTHER" id="PTHR15111">
    <property type="entry name" value="RNA POLYMERASE II SUBUNIT 5-MEDIATING PROTEIN NNX3"/>
    <property type="match status" value="1"/>
</dbReference>
<dbReference type="PANTHER" id="PTHR15111:SF0">
    <property type="entry name" value="UNCONVENTIONAL PREFOLDIN RPB5 INTERACTOR 1"/>
    <property type="match status" value="1"/>
</dbReference>
<dbReference type="Pfam" id="PF02996">
    <property type="entry name" value="Prefoldin"/>
    <property type="match status" value="1"/>
</dbReference>
<dbReference type="SUPFAM" id="SSF46579">
    <property type="entry name" value="Prefoldin"/>
    <property type="match status" value="1"/>
</dbReference>
<sequence length="524" mass="58994">MEAPPDPRPHASAAAPLRAPEVARLREEQEKVVTNCQEKIQHWKKVDNDYNALQERLSTLPDKLSYNIMVPFGPFAFMPGKLVHTNEVTVLLGDNWFAKCSAKQAVGLVEHRKEHVRKTIDDLKKVMKNFESRVEFTEDLQKMSDAAGDIVDIREEIKTDFEFKAKHRIAHKPHSKPKTSDIFEAEFANDLKSKDLLADKELWDRLEELERQEELLGEIDIDSKPDTVIANGEDVSSEEEKEDQNINVNMMHQVTDSLALSSCYNSLTNSELFNGQVNSPLNYSVNGSSSYHSNEDDGDNNDDGGDSENDHDTLGVEDNSIPTIYFSHTVEPKRVRINTGKNTTLKFSEKKEEAKRKRKNSSGSGHSPQELPMIRTPADIYRVFVDVVNGEYVPRKSILKSRSRENSVCSDTSESSAADFDDRRGVLRSISCEEATCSDASESILEEEQENHQKKLLPLSVTPEAFSGTVIEKEFLSPSLTPHPAMAHPVLPTIPERKEVLSEVSEGTTKRVSKFKAARLQQKN</sequence>
<keyword id="KW-0966">Cell projection</keyword>
<keyword id="KW-0963">Cytoplasm</keyword>
<keyword id="KW-0496">Mitochondrion</keyword>
<keyword id="KW-0539">Nucleus</keyword>
<keyword id="KW-0553">Oncogene</keyword>
<keyword id="KW-0597">Phosphoprotein</keyword>
<keyword id="KW-0650">Protein phosphatase inhibitor</keyword>
<keyword id="KW-1185">Reference proteome</keyword>
<keyword id="KW-0678">Repressor</keyword>
<keyword id="KW-0804">Transcription</keyword>
<keyword id="KW-0805">Transcription regulation</keyword>
<feature type="chain" id="PRO_0000328597" description="Unconventional prefoldin RPB5 interactor">
    <location>
        <begin position="1"/>
        <end position="524"/>
    </location>
</feature>
<feature type="region of interest" description="Disordered" evidence="3">
    <location>
        <begin position="1"/>
        <end position="20"/>
    </location>
</feature>
<feature type="region of interest" description="Disordered" evidence="3">
    <location>
        <begin position="284"/>
        <end position="320"/>
    </location>
</feature>
<feature type="region of interest" description="Disordered" evidence="3">
    <location>
        <begin position="335"/>
        <end position="373"/>
    </location>
</feature>
<feature type="compositionally biased region" description="Acidic residues" evidence="3">
    <location>
        <begin position="296"/>
        <end position="307"/>
    </location>
</feature>
<feature type="modified residue" description="Phosphoserine; by RPS6KB1" evidence="2">
    <location>
        <position position="361"/>
    </location>
</feature>
<feature type="modified residue" description="Phosphoserine" evidence="2">
    <location>
        <position position="431"/>
    </location>
</feature>
<feature type="sequence conflict" description="In Ref. 1; ABS45063." evidence="4" ref="1">
    <original>L</original>
    <variation>F</variation>
    <location>
        <position position="123"/>
    </location>
</feature>
<feature type="sequence conflict" description="In Ref. 1; ABS45063." evidence="4" ref="1">
    <original>I</original>
    <variation>V</variation>
    <location>
        <position position="229"/>
    </location>
</feature>
<feature type="sequence conflict" description="In Ref. 1; ABS45063." evidence="4" ref="1">
    <original>G</original>
    <variation>D</variation>
    <location>
        <position position="298"/>
    </location>
</feature>
<name>RMP_BOVIN</name>
<evidence type="ECO:0000250" key="1"/>
<evidence type="ECO:0000250" key="2">
    <source>
        <dbReference type="UniProtKB" id="O94763"/>
    </source>
</evidence>
<evidence type="ECO:0000256" key="3">
    <source>
        <dbReference type="SAM" id="MobiDB-lite"/>
    </source>
</evidence>
<evidence type="ECO:0000305" key="4"/>
<reference key="1">
    <citation type="journal article" date="2005" name="BMC Genomics">
        <title>Characterization of 954 bovine full-CDS cDNA sequences.</title>
        <authorList>
            <person name="Harhay G.P."/>
            <person name="Sonstegard T.S."/>
            <person name="Keele J.W."/>
            <person name="Heaton M.P."/>
            <person name="Clawson M.L."/>
            <person name="Snelling W.M."/>
            <person name="Wiedmann R.T."/>
            <person name="Van Tassell C.P."/>
            <person name="Smith T.P.L."/>
        </authorList>
    </citation>
    <scope>NUCLEOTIDE SEQUENCE [LARGE SCALE MRNA]</scope>
</reference>
<reference key="2">
    <citation type="submission" date="2005-10" db="EMBL/GenBank/DDBJ databases">
        <authorList>
            <consortium name="NIH - Mammalian Gene Collection (MGC) project"/>
        </authorList>
    </citation>
    <scope>NUCLEOTIDE SEQUENCE [LARGE SCALE MRNA]</scope>
    <source>
        <strain>Hereford</strain>
        <tissue>Thymus</tissue>
    </source>
</reference>